<gene>
    <name type="primary">PIP5K4</name>
    <name type="ordered locus">At3g56960</name>
    <name type="ORF">F24I3.40</name>
</gene>
<accession>Q9M1K2</accession>
<dbReference type="EC" id="2.7.1.68"/>
<dbReference type="EMBL" id="AL138655">
    <property type="protein sequence ID" value="CAB72166.1"/>
    <property type="molecule type" value="Genomic_DNA"/>
</dbReference>
<dbReference type="EMBL" id="CP002686">
    <property type="protein sequence ID" value="AEE79593.1"/>
    <property type="molecule type" value="Genomic_DNA"/>
</dbReference>
<dbReference type="EMBL" id="CP002686">
    <property type="protein sequence ID" value="ANM63864.1"/>
    <property type="molecule type" value="Genomic_DNA"/>
</dbReference>
<dbReference type="PIR" id="T47756">
    <property type="entry name" value="T47756"/>
</dbReference>
<dbReference type="RefSeq" id="NP_001319773.1">
    <property type="nucleotide sequence ID" value="NM_001339834.1"/>
</dbReference>
<dbReference type="RefSeq" id="NP_191255.1">
    <property type="nucleotide sequence ID" value="NM_115555.2"/>
</dbReference>
<dbReference type="SMR" id="Q9M1K2"/>
<dbReference type="BioGRID" id="10179">
    <property type="interactions" value="2"/>
</dbReference>
<dbReference type="FunCoup" id="Q9M1K2">
    <property type="interactions" value="2690"/>
</dbReference>
<dbReference type="STRING" id="3702.Q9M1K2"/>
<dbReference type="iPTMnet" id="Q9M1K2"/>
<dbReference type="PaxDb" id="3702-AT3G56960.1"/>
<dbReference type="ProteomicsDB" id="236736"/>
<dbReference type="EnsemblPlants" id="AT3G56960.1">
    <property type="protein sequence ID" value="AT3G56960.1"/>
    <property type="gene ID" value="AT3G56960"/>
</dbReference>
<dbReference type="EnsemblPlants" id="AT3G56960.2">
    <property type="protein sequence ID" value="AT3G56960.2"/>
    <property type="gene ID" value="AT3G56960"/>
</dbReference>
<dbReference type="GeneID" id="824863"/>
<dbReference type="Gramene" id="AT3G56960.1">
    <property type="protein sequence ID" value="AT3G56960.1"/>
    <property type="gene ID" value="AT3G56960"/>
</dbReference>
<dbReference type="Gramene" id="AT3G56960.2">
    <property type="protein sequence ID" value="AT3G56960.2"/>
    <property type="gene ID" value="AT3G56960"/>
</dbReference>
<dbReference type="KEGG" id="ath:AT3G56960"/>
<dbReference type="Araport" id="AT3G56960"/>
<dbReference type="TAIR" id="AT3G56960">
    <property type="gene designation" value="PIP5K4"/>
</dbReference>
<dbReference type="eggNOG" id="KOG0229">
    <property type="taxonomic scope" value="Eukaryota"/>
</dbReference>
<dbReference type="HOGENOM" id="CLU_004312_6_4_1"/>
<dbReference type="InParanoid" id="Q9M1K2"/>
<dbReference type="OMA" id="FIWTDGC"/>
<dbReference type="PhylomeDB" id="Q9M1K2"/>
<dbReference type="BioCyc" id="ARA:AT3G56960-MONOMER"/>
<dbReference type="PRO" id="PR:Q9M1K2"/>
<dbReference type="Proteomes" id="UP000006548">
    <property type="component" value="Chromosome 3"/>
</dbReference>
<dbReference type="ExpressionAtlas" id="Q9M1K2">
    <property type="expression patterns" value="baseline and differential"/>
</dbReference>
<dbReference type="GO" id="GO:0016324">
    <property type="term" value="C:apical plasma membrane"/>
    <property type="evidence" value="ECO:0000314"/>
    <property type="project" value="TAIR"/>
</dbReference>
<dbReference type="GO" id="GO:0005829">
    <property type="term" value="C:cytosol"/>
    <property type="evidence" value="ECO:0000314"/>
    <property type="project" value="TAIR"/>
</dbReference>
<dbReference type="GO" id="GO:0005886">
    <property type="term" value="C:plasma membrane"/>
    <property type="evidence" value="ECO:0000314"/>
    <property type="project" value="TAIR"/>
</dbReference>
<dbReference type="GO" id="GO:0090406">
    <property type="term" value="C:pollen tube"/>
    <property type="evidence" value="ECO:0000314"/>
    <property type="project" value="TAIR"/>
</dbReference>
<dbReference type="GO" id="GO:0016308">
    <property type="term" value="F:1-phosphatidylinositol-4-phosphate 5-kinase activity"/>
    <property type="evidence" value="ECO:0000314"/>
    <property type="project" value="TAIR"/>
</dbReference>
<dbReference type="GO" id="GO:0005524">
    <property type="term" value="F:ATP binding"/>
    <property type="evidence" value="ECO:0007669"/>
    <property type="project" value="UniProtKB-KW"/>
</dbReference>
<dbReference type="GO" id="GO:0006897">
    <property type="term" value="P:endocytosis"/>
    <property type="evidence" value="ECO:0000315"/>
    <property type="project" value="TAIR"/>
</dbReference>
<dbReference type="GO" id="GO:0007164">
    <property type="term" value="P:establishment of tissue polarity"/>
    <property type="evidence" value="ECO:0000315"/>
    <property type="project" value="TAIR"/>
</dbReference>
<dbReference type="GO" id="GO:0046488">
    <property type="term" value="P:phosphatidylinositol metabolic process"/>
    <property type="evidence" value="ECO:0000314"/>
    <property type="project" value="TAIR"/>
</dbReference>
<dbReference type="GO" id="GO:0009827">
    <property type="term" value="P:plant-type cell wall modification"/>
    <property type="evidence" value="ECO:0000315"/>
    <property type="project" value="TAIR"/>
</dbReference>
<dbReference type="GO" id="GO:0009846">
    <property type="term" value="P:pollen germination"/>
    <property type="evidence" value="ECO:0000316"/>
    <property type="project" value="TAIR"/>
</dbReference>
<dbReference type="GO" id="GO:0009860">
    <property type="term" value="P:pollen tube growth"/>
    <property type="evidence" value="ECO:0000315"/>
    <property type="project" value="TAIR"/>
</dbReference>
<dbReference type="GO" id="GO:0010118">
    <property type="term" value="P:stomatal movement"/>
    <property type="evidence" value="ECO:0000315"/>
    <property type="project" value="TAIR"/>
</dbReference>
<dbReference type="CDD" id="cd17302">
    <property type="entry name" value="PIPKc_AtPIP5K_like"/>
    <property type="match status" value="1"/>
</dbReference>
<dbReference type="FunFam" id="2.20.110.10:FF:000015">
    <property type="entry name" value="Phosphatidylinositol 4-phosphate 5-kinase"/>
    <property type="match status" value="1"/>
</dbReference>
<dbReference type="FunFam" id="2.20.110.10:FF:000031">
    <property type="entry name" value="Phosphatidylinositol 4-phosphate 5-kinase"/>
    <property type="match status" value="1"/>
</dbReference>
<dbReference type="FunFam" id="3.30.800.10:FF:000003">
    <property type="entry name" value="Phosphatidylinositol 4-phosphate 5-kinase"/>
    <property type="match status" value="1"/>
</dbReference>
<dbReference type="FunFam" id="3.30.810.10:FF:000007">
    <property type="entry name" value="Phosphatidylinositol 4-phosphate 5-kinase"/>
    <property type="match status" value="1"/>
</dbReference>
<dbReference type="FunFam" id="3.30.810.10:FF:000009">
    <property type="entry name" value="Phosphatidylinositol 4-phosphate 5-kinase"/>
    <property type="match status" value="1"/>
</dbReference>
<dbReference type="Gene3D" id="3.30.810.10">
    <property type="entry name" value="2-Layer Sandwich"/>
    <property type="match status" value="2"/>
</dbReference>
<dbReference type="Gene3D" id="2.20.110.10">
    <property type="entry name" value="Histone H3 K4-specific methyltransferase SET7/9 N-terminal domain"/>
    <property type="match status" value="4"/>
</dbReference>
<dbReference type="Gene3D" id="3.30.800.10">
    <property type="entry name" value="Phosphatidylinositol Phosphate Kinase II Beta"/>
    <property type="match status" value="1"/>
</dbReference>
<dbReference type="InterPro" id="IPR003409">
    <property type="entry name" value="MORN"/>
</dbReference>
<dbReference type="InterPro" id="IPR017163">
    <property type="entry name" value="PIno-4-P-5_kinase_pln"/>
</dbReference>
<dbReference type="InterPro" id="IPR027483">
    <property type="entry name" value="PInositol-4-P-4/5-kinase_C_sf"/>
</dbReference>
<dbReference type="InterPro" id="IPR002498">
    <property type="entry name" value="PInositol-4-P-4/5-kinase_core"/>
</dbReference>
<dbReference type="InterPro" id="IPR027484">
    <property type="entry name" value="PInositol-4-P-5-kinase_N"/>
</dbReference>
<dbReference type="InterPro" id="IPR023610">
    <property type="entry name" value="PInositol-4/5-P-5/4-kinase"/>
</dbReference>
<dbReference type="PANTHER" id="PTHR23086:SF29">
    <property type="entry name" value="PHOSPHATIDYLINOSITOL 4-PHOSPHATE 5-KINASE 4"/>
    <property type="match status" value="1"/>
</dbReference>
<dbReference type="PANTHER" id="PTHR23086">
    <property type="entry name" value="PHOSPHATIDYLINOSITOL-4-PHOSPHATE 5-KINASE"/>
    <property type="match status" value="1"/>
</dbReference>
<dbReference type="Pfam" id="PF02493">
    <property type="entry name" value="MORN"/>
    <property type="match status" value="8"/>
</dbReference>
<dbReference type="Pfam" id="PF01504">
    <property type="entry name" value="PIP5K"/>
    <property type="match status" value="1"/>
</dbReference>
<dbReference type="PIRSF" id="PIRSF037274">
    <property type="entry name" value="PIP5K_plant_prd"/>
    <property type="match status" value="1"/>
</dbReference>
<dbReference type="SMART" id="SM00698">
    <property type="entry name" value="MORN"/>
    <property type="match status" value="7"/>
</dbReference>
<dbReference type="SMART" id="SM00330">
    <property type="entry name" value="PIPKc"/>
    <property type="match status" value="1"/>
</dbReference>
<dbReference type="SUPFAM" id="SSF82185">
    <property type="entry name" value="Histone H3 K4-specific methyltransferase SET7/9 N-terminal domain"/>
    <property type="match status" value="2"/>
</dbReference>
<dbReference type="SUPFAM" id="SSF56104">
    <property type="entry name" value="SAICAR synthase-like"/>
    <property type="match status" value="1"/>
</dbReference>
<dbReference type="PROSITE" id="PS51455">
    <property type="entry name" value="PIPK"/>
    <property type="match status" value="1"/>
</dbReference>
<keyword id="KW-0067">ATP-binding</keyword>
<keyword id="KW-0418">Kinase</keyword>
<keyword id="KW-0547">Nucleotide-binding</keyword>
<keyword id="KW-1185">Reference proteome</keyword>
<keyword id="KW-0677">Repeat</keyword>
<keyword id="KW-0808">Transferase</keyword>
<sequence length="779" mass="89238">MSKEQSCVLKAWEVTVRKTQQAKKRANSIFGTVSVAPQTDDDATTTTEENDDETSTNRSSIGELYHAERILPNGDYYTGQWYDSFPHGHGKYLWTDGCMYIGDWYNGKTMGRGKFGWPSGATYEGEFKSGYMDGVGLYTGPSGDTYKGQWVMNLKHGHGIKRFANGDVYDGEWRRGLQEAQGKYQWRDGSYYMGEWKNATICGKGTFIWTDGNRYDGFWDDGFPRGNGTFKWADGSFYVGHWSNDPEEMNGTYYPSGDDGSPEWDPKDVFTNLSEYKICSGERVPVLPSQKKLSVWNSSKRVEKPRRMSVDGRVSVGVDRAFEKMNMWGTESGEGAADIDSTTRRDLDAEMMRLEAEGFIQSLRPSPAPMRLPRAGRKQGETISKGHRNYELMLNLQLGIRHAVGKQAPVVSLDLKHSAFDPKEKVWTRFPPEGTKYTPPHQSSEFKWKDYCPLVFRSLRKLFKVDPADYMLSICGNDALRELSSPGKSGSFFYLTNDDRYMIKTMKKSETKVLLRMLAAYYNHVRAFENTLVIRFYGLHCVKLTGPIQKKVRFVIMGNLFCSEYSIHRRFDLKGSSLGRTTDKPESEINSNTILKDLDLNFIFRLQKAWYQEFIRQVDKDCEFLEQERIMDYSLLVGIHFREASVAGELIPSGARTPIGEFEDESAPRLSRADVDQLLSDPTRWASIRLGGNMPARAERTMRRSDCEFQLVGEPTGEYYEVVMIFGIIDILQDYDISKKLEHAYKSIQYDPTSISAVDPRLYSRRFRDFIFKVFTEDN</sequence>
<proteinExistence type="predicted"/>
<reference key="1">
    <citation type="journal article" date="2000" name="Nature">
        <title>Sequence and analysis of chromosome 3 of the plant Arabidopsis thaliana.</title>
        <authorList>
            <person name="Salanoubat M."/>
            <person name="Lemcke K."/>
            <person name="Rieger M."/>
            <person name="Ansorge W."/>
            <person name="Unseld M."/>
            <person name="Fartmann B."/>
            <person name="Valle G."/>
            <person name="Bloecker H."/>
            <person name="Perez-Alonso M."/>
            <person name="Obermaier B."/>
            <person name="Delseny M."/>
            <person name="Boutry M."/>
            <person name="Grivell L.A."/>
            <person name="Mache R."/>
            <person name="Puigdomenech P."/>
            <person name="De Simone V."/>
            <person name="Choisne N."/>
            <person name="Artiguenave F."/>
            <person name="Robert C."/>
            <person name="Brottier P."/>
            <person name="Wincker P."/>
            <person name="Cattolico L."/>
            <person name="Weissenbach J."/>
            <person name="Saurin W."/>
            <person name="Quetier F."/>
            <person name="Schaefer M."/>
            <person name="Mueller-Auer S."/>
            <person name="Gabel C."/>
            <person name="Fuchs M."/>
            <person name="Benes V."/>
            <person name="Wurmbach E."/>
            <person name="Drzonek H."/>
            <person name="Erfle H."/>
            <person name="Jordan N."/>
            <person name="Bangert S."/>
            <person name="Wiedelmann R."/>
            <person name="Kranz H."/>
            <person name="Voss H."/>
            <person name="Holland R."/>
            <person name="Brandt P."/>
            <person name="Nyakatura G."/>
            <person name="Vezzi A."/>
            <person name="D'Angelo M."/>
            <person name="Pallavicini A."/>
            <person name="Toppo S."/>
            <person name="Simionati B."/>
            <person name="Conrad A."/>
            <person name="Hornischer K."/>
            <person name="Kauer G."/>
            <person name="Loehnert T.-H."/>
            <person name="Nordsiek G."/>
            <person name="Reichelt J."/>
            <person name="Scharfe M."/>
            <person name="Schoen O."/>
            <person name="Bargues M."/>
            <person name="Terol J."/>
            <person name="Climent J."/>
            <person name="Navarro P."/>
            <person name="Collado C."/>
            <person name="Perez-Perez A."/>
            <person name="Ottenwaelder B."/>
            <person name="Duchemin D."/>
            <person name="Cooke R."/>
            <person name="Laudie M."/>
            <person name="Berger-Llauro C."/>
            <person name="Purnelle B."/>
            <person name="Masuy D."/>
            <person name="de Haan M."/>
            <person name="Maarse A.C."/>
            <person name="Alcaraz J.-P."/>
            <person name="Cottet A."/>
            <person name="Casacuberta E."/>
            <person name="Monfort A."/>
            <person name="Argiriou A."/>
            <person name="Flores M."/>
            <person name="Liguori R."/>
            <person name="Vitale D."/>
            <person name="Mannhaupt G."/>
            <person name="Haase D."/>
            <person name="Schoof H."/>
            <person name="Rudd S."/>
            <person name="Zaccaria P."/>
            <person name="Mewes H.-W."/>
            <person name="Mayer K.F.X."/>
            <person name="Kaul S."/>
            <person name="Town C.D."/>
            <person name="Koo H.L."/>
            <person name="Tallon L.J."/>
            <person name="Jenkins J."/>
            <person name="Rooney T."/>
            <person name="Rizzo M."/>
            <person name="Walts A."/>
            <person name="Utterback T."/>
            <person name="Fujii C.Y."/>
            <person name="Shea T.P."/>
            <person name="Creasy T.H."/>
            <person name="Haas B."/>
            <person name="Maiti R."/>
            <person name="Wu D."/>
            <person name="Peterson J."/>
            <person name="Van Aken S."/>
            <person name="Pai G."/>
            <person name="Militscher J."/>
            <person name="Sellers P."/>
            <person name="Gill J.E."/>
            <person name="Feldblyum T.V."/>
            <person name="Preuss D."/>
            <person name="Lin X."/>
            <person name="Nierman W.C."/>
            <person name="Salzberg S.L."/>
            <person name="White O."/>
            <person name="Venter J.C."/>
            <person name="Fraser C.M."/>
            <person name="Kaneko T."/>
            <person name="Nakamura Y."/>
            <person name="Sato S."/>
            <person name="Kato T."/>
            <person name="Asamizu E."/>
            <person name="Sasamoto S."/>
            <person name="Kimura T."/>
            <person name="Idesawa K."/>
            <person name="Kawashima K."/>
            <person name="Kishida Y."/>
            <person name="Kiyokawa C."/>
            <person name="Kohara M."/>
            <person name="Matsumoto M."/>
            <person name="Matsuno A."/>
            <person name="Muraki A."/>
            <person name="Nakayama S."/>
            <person name="Nakazaki N."/>
            <person name="Shinpo S."/>
            <person name="Takeuchi C."/>
            <person name="Wada T."/>
            <person name="Watanabe A."/>
            <person name="Yamada M."/>
            <person name="Yasuda M."/>
            <person name="Tabata S."/>
        </authorList>
    </citation>
    <scope>NUCLEOTIDE SEQUENCE [LARGE SCALE GENOMIC DNA]</scope>
    <source>
        <strain>cv. Columbia</strain>
    </source>
</reference>
<reference key="2">
    <citation type="journal article" date="2017" name="Plant J.">
        <title>Araport11: a complete reannotation of the Arabidopsis thaliana reference genome.</title>
        <authorList>
            <person name="Cheng C.Y."/>
            <person name="Krishnakumar V."/>
            <person name="Chan A.P."/>
            <person name="Thibaud-Nissen F."/>
            <person name="Schobel S."/>
            <person name="Town C.D."/>
        </authorList>
    </citation>
    <scope>GENOME REANNOTATION</scope>
    <source>
        <strain>cv. Columbia</strain>
    </source>
</reference>
<reference key="3">
    <citation type="journal article" date="2002" name="Plant Physiol.">
        <title>Inositol phospholipid metabolism in Arabidopsis. Characterized and putative isoforms of inositol phospholipid kinase and phosphoinositide-specific phospholipase C.</title>
        <authorList>
            <person name="Mueller-Roeber B."/>
            <person name="Pical C."/>
        </authorList>
    </citation>
    <scope>GENE FAMILY</scope>
    <scope>NOMENCLATURE</scope>
</reference>
<organism>
    <name type="scientific">Arabidopsis thaliana</name>
    <name type="common">Mouse-ear cress</name>
    <dbReference type="NCBI Taxonomy" id="3702"/>
    <lineage>
        <taxon>Eukaryota</taxon>
        <taxon>Viridiplantae</taxon>
        <taxon>Streptophyta</taxon>
        <taxon>Embryophyta</taxon>
        <taxon>Tracheophyta</taxon>
        <taxon>Spermatophyta</taxon>
        <taxon>Magnoliopsida</taxon>
        <taxon>eudicotyledons</taxon>
        <taxon>Gunneridae</taxon>
        <taxon>Pentapetalae</taxon>
        <taxon>rosids</taxon>
        <taxon>malvids</taxon>
        <taxon>Brassicales</taxon>
        <taxon>Brassicaceae</taxon>
        <taxon>Camelineae</taxon>
        <taxon>Arabidopsis</taxon>
    </lineage>
</organism>
<protein>
    <recommendedName>
        <fullName>Phosphatidylinositol 4-phosphate 5-kinase 4</fullName>
        <shortName>AtPIP5K4</shortName>
        <ecNumber>2.7.1.68</ecNumber>
    </recommendedName>
    <alternativeName>
        <fullName>1-phosphatidylinositol 4-phosphate kinase 4</fullName>
    </alternativeName>
    <alternativeName>
        <fullName>Diphosphoinositide kinase 4</fullName>
    </alternativeName>
    <alternativeName>
        <fullName>PtdIns(4)P-5-kinase 4</fullName>
    </alternativeName>
</protein>
<name>PI5K4_ARATH</name>
<comment type="catalytic activity">
    <reaction>
        <text>a 1,2-diacyl-sn-glycero-3-phospho-(1D-myo-inositol 4-phosphate) + ATP = a 1,2-diacyl-sn-glycero-3-phospho-(1D-myo-inositol-4,5-bisphosphate) + ADP + H(+)</text>
        <dbReference type="Rhea" id="RHEA:14425"/>
        <dbReference type="ChEBI" id="CHEBI:15378"/>
        <dbReference type="ChEBI" id="CHEBI:30616"/>
        <dbReference type="ChEBI" id="CHEBI:58178"/>
        <dbReference type="ChEBI" id="CHEBI:58456"/>
        <dbReference type="ChEBI" id="CHEBI:456216"/>
        <dbReference type="EC" id="2.7.1.68"/>
    </reaction>
</comment>
<feature type="chain" id="PRO_0000185476" description="Phosphatidylinositol 4-phosphate 5-kinase 4">
    <location>
        <begin position="1"/>
        <end position="779"/>
    </location>
</feature>
<feature type="repeat" description="MORN 1">
    <location>
        <begin position="77"/>
        <end position="99"/>
    </location>
</feature>
<feature type="repeat" description="MORN 2">
    <location>
        <begin position="100"/>
        <end position="122"/>
    </location>
</feature>
<feature type="repeat" description="MORN 3">
    <location>
        <begin position="123"/>
        <end position="145"/>
    </location>
</feature>
<feature type="repeat" description="MORN 4">
    <location>
        <begin position="146"/>
        <end position="168"/>
    </location>
</feature>
<feature type="repeat" description="MORN 5">
    <location>
        <begin position="169"/>
        <end position="191"/>
    </location>
</feature>
<feature type="repeat" description="MORN 6">
    <location>
        <begin position="192"/>
        <end position="214"/>
    </location>
</feature>
<feature type="repeat" description="MORN 7">
    <location>
        <begin position="215"/>
        <end position="237"/>
    </location>
</feature>
<feature type="repeat" description="MORN 8">
    <location>
        <begin position="238"/>
        <end position="259"/>
    </location>
</feature>
<feature type="domain" description="PIPK" evidence="2">
    <location>
        <begin position="382"/>
        <end position="775"/>
    </location>
</feature>
<feature type="region of interest" description="Disordered" evidence="3">
    <location>
        <begin position="20"/>
        <end position="61"/>
    </location>
</feature>
<feature type="region of interest" description="Activation loop" evidence="1">
    <location>
        <begin position="735"/>
        <end position="756"/>
    </location>
</feature>
<feature type="compositionally biased region" description="Acidic residues" evidence="3">
    <location>
        <begin position="39"/>
        <end position="54"/>
    </location>
</feature>
<evidence type="ECO:0000250" key="1"/>
<evidence type="ECO:0000255" key="2">
    <source>
        <dbReference type="PROSITE-ProRule" id="PRU00781"/>
    </source>
</evidence>
<evidence type="ECO:0000256" key="3">
    <source>
        <dbReference type="SAM" id="MobiDB-lite"/>
    </source>
</evidence>